<organism>
    <name type="scientific">Human adenovirus A serotype 12</name>
    <name type="common">HAdV-12</name>
    <name type="synonym">Human adenovirus 12</name>
    <dbReference type="NCBI Taxonomy" id="28282"/>
    <lineage>
        <taxon>Viruses</taxon>
        <taxon>Varidnaviria</taxon>
        <taxon>Bamfordvirae</taxon>
        <taxon>Preplasmiviricota</taxon>
        <taxon>Tectiliviricetes</taxon>
        <taxon>Rowavirales</taxon>
        <taxon>Adenoviridae</taxon>
        <taxon>Mastadenovirus</taxon>
        <taxon>Human mastadenovirus A</taxon>
    </lineage>
</organism>
<reference key="1">
    <citation type="journal article" date="1983" name="Virology">
        <title>Structure and function of adenovirus DNA binding protein: comparison of the amino acid sequences of the Ad5 and Ad12 proteins derived from the nucleotide sequence of the corresponding genes.</title>
        <authorList>
            <person name="Kruijer W."/>
            <person name="van Schaik F.M.A."/>
            <person name="Speijer J.G."/>
            <person name="Sussenbach J.S."/>
        </authorList>
    </citation>
    <scope>NUCLEOTIDE SEQUENCE [GENOMIC DNA]</scope>
</reference>
<reference key="2">
    <citation type="journal article" date="1994" name="J. Virol.">
        <title>Nucleotide sequence of human adenovirus type 12 DNA: comparative functional analysis.</title>
        <authorList>
            <person name="Sprengel J."/>
            <person name="Schmitz B."/>
            <person name="Heuss-Neitzel D."/>
            <person name="Zock C."/>
            <person name="Doerfler W."/>
        </authorList>
    </citation>
    <scope>NUCLEOTIDE SEQUENCE [LARGE SCALE GENOMIC DNA]</scope>
</reference>
<keyword id="KW-0235">DNA replication</keyword>
<keyword id="KW-0238">DNA-binding</keyword>
<keyword id="KW-0244">Early protein</keyword>
<keyword id="KW-1048">Host nucleus</keyword>
<keyword id="KW-0945">Host-virus interaction</keyword>
<keyword id="KW-0479">Metal-binding</keyword>
<keyword id="KW-0597">Phosphoprotein</keyword>
<keyword id="KW-1185">Reference proteome</keyword>
<keyword id="KW-1194">Viral DNA replication</keyword>
<keyword id="KW-0862">Zinc</keyword>
<dbReference type="EMBL" id="V01483">
    <property type="protein sequence ID" value="CAA24732.1"/>
    <property type="molecule type" value="Genomic_DNA"/>
</dbReference>
<dbReference type="EMBL" id="X73487">
    <property type="protein sequence ID" value="CAA51893.1"/>
    <property type="molecule type" value="Genomic_DNA"/>
</dbReference>
<dbReference type="PIR" id="A03835">
    <property type="entry name" value="ERAD12"/>
</dbReference>
<dbReference type="SMR" id="P04498"/>
<dbReference type="KEGG" id="vg:1460850"/>
<dbReference type="Proteomes" id="UP000004993">
    <property type="component" value="Genome"/>
</dbReference>
<dbReference type="GO" id="GO:0042025">
    <property type="term" value="C:host cell nucleus"/>
    <property type="evidence" value="ECO:0000250"/>
    <property type="project" value="UniProtKB"/>
</dbReference>
<dbReference type="GO" id="GO:0019028">
    <property type="term" value="C:viral capsid"/>
    <property type="evidence" value="ECO:0000250"/>
    <property type="project" value="UniProtKB"/>
</dbReference>
<dbReference type="GO" id="GO:0003677">
    <property type="term" value="F:DNA binding"/>
    <property type="evidence" value="ECO:0000250"/>
    <property type="project" value="UniProtKB"/>
</dbReference>
<dbReference type="GO" id="GO:0008270">
    <property type="term" value="F:zinc ion binding"/>
    <property type="evidence" value="ECO:0007669"/>
    <property type="project" value="UniProtKB-UniRule"/>
</dbReference>
<dbReference type="GO" id="GO:0006260">
    <property type="term" value="P:DNA replication"/>
    <property type="evidence" value="ECO:0007669"/>
    <property type="project" value="UniProtKB-KW"/>
</dbReference>
<dbReference type="GO" id="GO:0006351">
    <property type="term" value="P:DNA-templated transcription"/>
    <property type="evidence" value="ECO:0007669"/>
    <property type="project" value="UniProtKB-UniRule"/>
</dbReference>
<dbReference type="GO" id="GO:0045740">
    <property type="term" value="P:positive regulation of DNA replication"/>
    <property type="evidence" value="ECO:0007669"/>
    <property type="project" value="UniProtKB-UniRule"/>
</dbReference>
<dbReference type="GO" id="GO:0039693">
    <property type="term" value="P:viral DNA genome replication"/>
    <property type="evidence" value="ECO:0000250"/>
    <property type="project" value="UniProtKB"/>
</dbReference>
<dbReference type="GO" id="GO:0039687">
    <property type="term" value="P:viral DNA strand displacement replication"/>
    <property type="evidence" value="ECO:0000250"/>
    <property type="project" value="UniProtKB"/>
</dbReference>
<dbReference type="FunFam" id="1.10.269.10:FF:000001">
    <property type="entry name" value="DNA-binding protein"/>
    <property type="match status" value="1"/>
</dbReference>
<dbReference type="Gene3D" id="3.90.148.10">
    <property type="entry name" value="Adenovirus DNA-binding, C-terminal domain superfamily/Adenovirus DNA-binding, zinc binding domain"/>
    <property type="match status" value="1"/>
</dbReference>
<dbReference type="Gene3D" id="1.10.269.10">
    <property type="entry name" value="Adenovirus DNA-binding, N-terminal domain"/>
    <property type="match status" value="1"/>
</dbReference>
<dbReference type="HAMAP" id="MF_04054">
    <property type="entry name" value="ADV_DNB2"/>
    <property type="match status" value="1"/>
</dbReference>
<dbReference type="InterPro" id="IPR036367">
    <property type="entry name" value="Ad_DBP_C_sf"/>
</dbReference>
<dbReference type="InterPro" id="IPR036368">
    <property type="entry name" value="ADBP_zn-bd_sf"/>
</dbReference>
<dbReference type="InterPro" id="IPR003176">
    <property type="entry name" value="Adenovirus_DNA-bd_a"/>
</dbReference>
<dbReference type="InterPro" id="IPR036362">
    <property type="entry name" value="Adenovirus_DNA-bd_N_sf"/>
</dbReference>
<dbReference type="InterPro" id="IPR005376">
    <property type="entry name" value="Adenovirus_DNA-bd_zn-bd"/>
</dbReference>
<dbReference type="InterPro" id="IPR037540">
    <property type="entry name" value="ADV_DNB2"/>
</dbReference>
<dbReference type="Pfam" id="PF02236">
    <property type="entry name" value="Viral_DNA_bi"/>
    <property type="match status" value="1"/>
</dbReference>
<dbReference type="Pfam" id="PF03728">
    <property type="entry name" value="Viral_DNA_Zn_bi"/>
    <property type="match status" value="2"/>
</dbReference>
<dbReference type="SUPFAM" id="SSF47724">
    <property type="entry name" value="Domain of early E2A DNA-binding protein, ADDBP"/>
    <property type="match status" value="1"/>
</dbReference>
<dbReference type="SUPFAM" id="SSF57917">
    <property type="entry name" value="Zn-binding domains of ADDBP"/>
    <property type="match status" value="2"/>
</dbReference>
<organismHost>
    <name type="scientific">Homo sapiens</name>
    <name type="common">Human</name>
    <dbReference type="NCBI Taxonomy" id="9606"/>
</organismHost>
<accession>P04498</accession>
<protein>
    <recommendedName>
        <fullName evidence="1">DNA-binding protein</fullName>
        <shortName evidence="1">DBP</shortName>
    </recommendedName>
    <alternativeName>
        <fullName evidence="1">Early 2A protein</fullName>
    </alternativeName>
    <alternativeName>
        <fullName evidence="1">Early E2A DNA-binding protein</fullName>
    </alternativeName>
</protein>
<comment type="function">
    <text evidence="1">Plays a role in the elongation phase of viral strand displacement replication by unwinding the template in an ATP-independent fashion, employing its capacity to form multimers. Also enhances the rate of initiation. Released from template upon second strand synthesis. Assembles in complex with viral pTP, viral pol, host NFIA and host POU2F1/OCT1 on viral origin of replication. Covers the whole ssDNA genome during synthesis. The complementary strand synthesis induces its relese from DNA template. May inhibit cellular transcription mediated by the interaction between host SRCAP and CBP.</text>
</comment>
<comment type="subunit">
    <text evidence="1">Homomultimerizes on viral ssDNA bound to pTP. Forms a initiation complex with viral polymerase, pTP and hosts NFIA and POU2F1/OCT1. Interacts with host SRCAP.</text>
</comment>
<comment type="subcellular location">
    <subcellularLocation>
        <location evidence="1">Host nucleus</location>
    </subcellularLocation>
    <text evidence="1">Accumulates in infected cells.</text>
</comment>
<comment type="domain">
    <text evidence="1">The C-terminal arm bridges DBP molecules together, thereby creating a chain.</text>
</comment>
<comment type="similarity">
    <text evidence="1">Belongs to the adenoviridae E2A DNA-binding protein family.</text>
</comment>
<name>DNB2_ADE12</name>
<sequence>MASNQHSQRERTPDRSAQPPPPKMGRYFLDSESEEELEAVPLPPKKKVKKSMAAIPLSPESAEEEEAEPPRAVLGVMGFSMPPVRIMHHADGSQSFQKMETRQVHVLKASAQNSDENEKNVVVVRNPASQPLVSAWEKGMEAMAMLMEKYHVDHDERATFRFLPDQGSVYKKICTTWLNEEKRGLQLTFSSQKTFQELMGRFLQGYMQAYAGVQQNSWEPTGCCVWEHKCTEREGELRCLHGMEMVRKEHLVEMDVTSESGQRALKENPSKAKVAQNRWGRNVVQIKNDDARCCFHDVGCGNNSFSGKSCGLFYSEGMKAQIAFRQIEAFMLADYPHMRHGQKRLLMPVRCECLNKQDGLPRMGRQLCKITPFNLSNVDNIDINEVTDPGALASIKYPCLLVFQCANPVYRNARGNAGPNCDFKISAPDVMGALQLVRQLWGENFDGSPPRLVIPEFKWHQRLQYRNISLPTNHGDCREEPFDF</sequence>
<feature type="chain" id="PRO_0000221681" description="DNA-binding protein">
    <location>
        <begin position="1"/>
        <end position="484"/>
    </location>
</feature>
<feature type="region of interest" description="Disordered" evidence="2">
    <location>
        <begin position="1"/>
        <end position="69"/>
    </location>
</feature>
<feature type="region of interest" description="Flexible loop" evidence="1">
    <location>
        <begin position="252"/>
        <end position="286"/>
    </location>
</feature>
<feature type="region of interest" description="C-terminal arm, DBP binding" evidence="1">
    <location>
        <begin position="468"/>
        <end position="484"/>
    </location>
</feature>
<feature type="compositionally biased region" description="Low complexity" evidence="2">
    <location>
        <begin position="51"/>
        <end position="60"/>
    </location>
</feature>
<feature type="binding site" evidence="1">
    <location>
        <position position="239"/>
    </location>
    <ligand>
        <name>Zn(2+)</name>
        <dbReference type="ChEBI" id="CHEBI:29105"/>
        <label>1</label>
    </ligand>
</feature>
<feature type="binding site" evidence="1">
    <location>
        <position position="241"/>
    </location>
    <ligand>
        <name>Zn(2+)</name>
        <dbReference type="ChEBI" id="CHEBI:29105"/>
        <label>1</label>
    </ligand>
</feature>
<feature type="binding site" evidence="1">
    <location>
        <position position="294"/>
    </location>
    <ligand>
        <name>Zn(2+)</name>
        <dbReference type="ChEBI" id="CHEBI:29105"/>
        <label>1</label>
    </ligand>
</feature>
<feature type="binding site" evidence="1">
    <location>
        <position position="310"/>
    </location>
    <ligand>
        <name>Zn(2+)</name>
        <dbReference type="ChEBI" id="CHEBI:29105"/>
        <label>1</label>
    </ligand>
</feature>
<feature type="binding site" evidence="1">
    <location>
        <position position="351"/>
    </location>
    <ligand>
        <name>Zn(2+)</name>
        <dbReference type="ChEBI" id="CHEBI:29105"/>
        <label>2</label>
    </ligand>
</feature>
<feature type="binding site" evidence="1">
    <location>
        <position position="353"/>
    </location>
    <ligand>
        <name>Zn(2+)</name>
        <dbReference type="ChEBI" id="CHEBI:29105"/>
        <label>2</label>
    </ligand>
</feature>
<feature type="binding site" evidence="1">
    <location>
        <position position="405"/>
    </location>
    <ligand>
        <name>Zn(2+)</name>
        <dbReference type="ChEBI" id="CHEBI:29105"/>
        <label>2</label>
    </ligand>
</feature>
<feature type="binding site" evidence="1">
    <location>
        <position position="421"/>
    </location>
    <ligand>
        <name>Zn(2+)</name>
        <dbReference type="ChEBI" id="CHEBI:29105"/>
        <label>2</label>
    </ligand>
</feature>
<feature type="modified residue" description="Phosphotyrosine; by host" evidence="1">
    <location>
        <position position="150"/>
    </location>
</feature>
<proteinExistence type="inferred from homology"/>
<evidence type="ECO:0000255" key="1">
    <source>
        <dbReference type="HAMAP-Rule" id="MF_04054"/>
    </source>
</evidence>
<evidence type="ECO:0000256" key="2">
    <source>
        <dbReference type="SAM" id="MobiDB-lite"/>
    </source>
</evidence>
<gene>
    <name evidence="1" type="primary">DBP</name>
</gene>